<feature type="chain" id="PRO_0000404535" description="Putative movement protein">
    <location>
        <begin position="1"/>
        <end position="297"/>
    </location>
</feature>
<feature type="region of interest" description="Disordered" evidence="2">
    <location>
        <begin position="249"/>
        <end position="297"/>
    </location>
</feature>
<feature type="compositionally biased region" description="Basic and acidic residues" evidence="2">
    <location>
        <begin position="253"/>
        <end position="264"/>
    </location>
</feature>
<feature type="compositionally biased region" description="Polar residues" evidence="2">
    <location>
        <begin position="270"/>
        <end position="297"/>
    </location>
</feature>
<accession>Q1KZ55</accession>
<organismHost>
    <name type="scientific">Citrus sinensis</name>
    <name type="common">Sweet orange</name>
    <name type="synonym">Citrus aurantium var. sinensis</name>
    <dbReference type="NCBI Taxonomy" id="2711"/>
</organismHost>
<dbReference type="EMBL" id="DQ352195">
    <property type="protein sequence ID" value="ABC75825.1"/>
    <property type="molecule type" value="Genomic_RNA"/>
</dbReference>
<dbReference type="RefSeq" id="YP_654542.1">
    <property type="nucleotide sequence ID" value="NC_008170.1"/>
</dbReference>
<dbReference type="GeneID" id="4155852"/>
<dbReference type="KEGG" id="vg:4155852"/>
<dbReference type="Proteomes" id="UP000001101">
    <property type="component" value="Genome"/>
</dbReference>
<dbReference type="GO" id="GO:0044219">
    <property type="term" value="C:host cell plasmodesma"/>
    <property type="evidence" value="ECO:0007669"/>
    <property type="project" value="UniProtKB-SubCell"/>
</dbReference>
<dbReference type="GO" id="GO:0046740">
    <property type="term" value="P:transport of virus in host, cell to cell"/>
    <property type="evidence" value="ECO:0007669"/>
    <property type="project" value="UniProtKB-KW"/>
</dbReference>
<dbReference type="InterPro" id="IPR000603">
    <property type="entry name" value="MPV"/>
</dbReference>
<dbReference type="Pfam" id="PF00803">
    <property type="entry name" value="3A"/>
    <property type="match status" value="1"/>
</dbReference>
<organism>
    <name type="scientific">Citrus leprosis virus C (isolate Citrus sinesis/Brazil/Cordeiropolis/2003)</name>
    <name type="common">CiLV-C</name>
    <dbReference type="NCBI Taxonomy" id="686950"/>
    <lineage>
        <taxon>Viruses</taxon>
        <taxon>Riboviria</taxon>
        <taxon>Orthornavirae</taxon>
        <taxon>Kitrinoviricota</taxon>
        <taxon>Alsuviricetes</taxon>
        <taxon>Martellivirales</taxon>
        <taxon>Kitaviridae</taxon>
        <taxon>Cilevirus</taxon>
        <taxon>Cilevirus leprosis</taxon>
    </lineage>
</organism>
<evidence type="ECO:0000250" key="1"/>
<evidence type="ECO:0000256" key="2">
    <source>
        <dbReference type="SAM" id="MobiDB-lite"/>
    </source>
</evidence>
<gene>
    <name type="primary">MP</name>
</gene>
<name>MVP_CILVC</name>
<keyword id="KW-1031">Host cell junction</keyword>
<keyword id="KW-1185">Reference proteome</keyword>
<keyword id="KW-0813">Transport</keyword>
<keyword id="KW-0916">Viral movement protein</keyword>
<reference key="1">
    <citation type="journal article" date="2006" name="J. Gen. Virol.">
        <title>Complete nucleotide sequence, genomic organization and phylogenetic analysis of Citrus leprosis virus cytoplasmic type.</title>
        <authorList>
            <person name="Locali-Fabris E.C."/>
            <person name="Freitas-Astua J."/>
            <person name="Souza A.A."/>
            <person name="Takita M.A."/>
            <person name="Astua-Monge G."/>
            <person name="Antonioli-Luizon R."/>
            <person name="Rodrigues V."/>
            <person name="Targon M.L."/>
            <person name="Machado M.A."/>
        </authorList>
    </citation>
    <scope>NUCLEOTIDE SEQUENCE [GENOMIC RNA]</scope>
</reference>
<reference key="2">
    <citation type="submission" date="2006-01" db="EMBL/GenBank/DDBJ databases">
        <authorList>
            <person name="Locali E.C."/>
            <person name="Freitas-Astua J."/>
            <person name="Souza A.A."/>
            <person name="Takita M.A."/>
            <person name="Astua-Monge G."/>
            <person name="Antonioli-Luizon R."/>
            <person name="Rodrigues V."/>
            <person name="Targon M.L.P.N."/>
            <person name="Machado M.A."/>
        </authorList>
    </citation>
    <scope>NUCLEOTIDE SEQUENCE [GENOMIC RNA]</scope>
</reference>
<comment type="function">
    <text evidence="1">Transports viral genome to neighboring plant cells directly through plasmosdesmata, without any budding. The movement protein allows efficient cell to cell propagation, by bypassing the host cell wall barrier (By similarity).</text>
</comment>
<comment type="subcellular location">
    <subcellularLocation>
        <location>Host cell junction</location>
        <location>Host plasmodesma</location>
    </subcellularLocation>
    <text evidence="1">Assembles into long tubular structures at the surface of the infected protoplast.</text>
</comment>
<proteinExistence type="inferred from homology"/>
<sequence length="297" mass="32532">MALSTNNNSSHVGADDFLELENILSSEYNEEGIFKTSKTVCIRTDKRIGVGFLTPNDMISRLVGFINRKAEDAGVRSVESFRQISDVVLIIVPQIALPAELSLKLVDSANILEAVNDQEVTVNSTGGPCVVVMNCAHSIPNEDRTHVNGSEVHRRLGIQYQVDCDNISGRVTTFSITALWREAFSFRPSFYKVSDPLVVPISVGFRKAVIAKSHADLQRSIGRGLIVTHHSSESSVTSESPIDLTVKKSTGLKIRDKSEDDNQRKHPVPLTSSNNKLKTLRVSTTPIVNGRSTSTSE</sequence>
<protein>
    <recommendedName>
        <fullName>Putative movement protein</fullName>
    </recommendedName>
</protein>